<gene>
    <name evidence="1" type="primary">nadD</name>
    <name type="ordered locus">Sare_3854</name>
</gene>
<evidence type="ECO:0000255" key="1">
    <source>
        <dbReference type="HAMAP-Rule" id="MF_00244"/>
    </source>
</evidence>
<evidence type="ECO:0000305" key="2"/>
<keyword id="KW-0067">ATP-binding</keyword>
<keyword id="KW-0520">NAD</keyword>
<keyword id="KW-0547">Nucleotide-binding</keyword>
<keyword id="KW-0548">Nucleotidyltransferase</keyword>
<keyword id="KW-0662">Pyridine nucleotide biosynthesis</keyword>
<keyword id="KW-0808">Transferase</keyword>
<reference key="1">
    <citation type="submission" date="2007-10" db="EMBL/GenBank/DDBJ databases">
        <title>Complete sequence of Salinispora arenicola CNS-205.</title>
        <authorList>
            <consortium name="US DOE Joint Genome Institute"/>
            <person name="Copeland A."/>
            <person name="Lucas S."/>
            <person name="Lapidus A."/>
            <person name="Barry K."/>
            <person name="Glavina del Rio T."/>
            <person name="Dalin E."/>
            <person name="Tice H."/>
            <person name="Pitluck S."/>
            <person name="Foster B."/>
            <person name="Schmutz J."/>
            <person name="Larimer F."/>
            <person name="Land M."/>
            <person name="Hauser L."/>
            <person name="Kyrpides N."/>
            <person name="Ivanova N."/>
            <person name="Jensen P.R."/>
            <person name="Moore B.S."/>
            <person name="Penn K."/>
            <person name="Jenkins C."/>
            <person name="Udwary D."/>
            <person name="Xiang L."/>
            <person name="Gontang E."/>
            <person name="Richardson P."/>
        </authorList>
    </citation>
    <scope>NUCLEOTIDE SEQUENCE [LARGE SCALE GENOMIC DNA]</scope>
    <source>
        <strain>CNS-205</strain>
    </source>
</reference>
<comment type="function">
    <text evidence="1">Catalyzes the reversible adenylation of nicotinate mononucleotide (NaMN) to nicotinic acid adenine dinucleotide (NaAD).</text>
</comment>
<comment type="catalytic activity">
    <reaction evidence="1">
        <text>nicotinate beta-D-ribonucleotide + ATP + H(+) = deamido-NAD(+) + diphosphate</text>
        <dbReference type="Rhea" id="RHEA:22860"/>
        <dbReference type="ChEBI" id="CHEBI:15378"/>
        <dbReference type="ChEBI" id="CHEBI:30616"/>
        <dbReference type="ChEBI" id="CHEBI:33019"/>
        <dbReference type="ChEBI" id="CHEBI:57502"/>
        <dbReference type="ChEBI" id="CHEBI:58437"/>
        <dbReference type="EC" id="2.7.7.18"/>
    </reaction>
</comment>
<comment type="pathway">
    <text evidence="1">Cofactor biosynthesis; NAD(+) biosynthesis; deamido-NAD(+) from nicotinate D-ribonucleotide: step 1/1.</text>
</comment>
<comment type="similarity">
    <text evidence="1">Belongs to the NadD family.</text>
</comment>
<comment type="sequence caution" evidence="2">
    <conflict type="erroneous initiation">
        <sequence resource="EMBL-CDS" id="ABV99647"/>
    </conflict>
</comment>
<sequence>MGGTFDPIHQGHLVAASEVADRFGLDEVIFVPTGQPWQKADEPVSPAEDRYLMTVIATASNPRFQVSRVDIDRGGPTYTIHTLRDLRAEYGAKVQLFFITGADALAKILSWKDLDEVFELAHFIGVTRPGFRLSDAHLPADTVSLVQVPAMAISSTDCRARVSRGEPLWYLVPDGVVQYIAKRRLYQK</sequence>
<organism>
    <name type="scientific">Salinispora arenicola (strain CNS-205)</name>
    <dbReference type="NCBI Taxonomy" id="391037"/>
    <lineage>
        <taxon>Bacteria</taxon>
        <taxon>Bacillati</taxon>
        <taxon>Actinomycetota</taxon>
        <taxon>Actinomycetes</taxon>
        <taxon>Micromonosporales</taxon>
        <taxon>Micromonosporaceae</taxon>
        <taxon>Salinispora</taxon>
    </lineage>
</organism>
<protein>
    <recommendedName>
        <fullName evidence="1">Probable nicotinate-nucleotide adenylyltransferase</fullName>
        <ecNumber evidence="1">2.7.7.18</ecNumber>
    </recommendedName>
    <alternativeName>
        <fullName evidence="1">Deamido-NAD(+) diphosphorylase</fullName>
    </alternativeName>
    <alternativeName>
        <fullName evidence="1">Deamido-NAD(+) pyrophosphorylase</fullName>
    </alternativeName>
    <alternativeName>
        <fullName evidence="1">Nicotinate mononucleotide adenylyltransferase</fullName>
        <shortName evidence="1">NaMN adenylyltransferase</shortName>
    </alternativeName>
</protein>
<feature type="chain" id="PRO_0000336734" description="Probable nicotinate-nucleotide adenylyltransferase">
    <location>
        <begin position="1"/>
        <end position="188"/>
    </location>
</feature>
<proteinExistence type="inferred from homology"/>
<accession>A8M0Y6</accession>
<name>NADD_SALAI</name>
<dbReference type="EC" id="2.7.7.18" evidence="1"/>
<dbReference type="EMBL" id="CP000850">
    <property type="protein sequence ID" value="ABV99647.1"/>
    <property type="status" value="ALT_INIT"/>
    <property type="molecule type" value="Genomic_DNA"/>
</dbReference>
<dbReference type="SMR" id="A8M0Y6"/>
<dbReference type="STRING" id="391037.Sare_3854"/>
<dbReference type="KEGG" id="saq:Sare_3854"/>
<dbReference type="eggNOG" id="COG1057">
    <property type="taxonomic scope" value="Bacteria"/>
</dbReference>
<dbReference type="HOGENOM" id="CLU_069765_1_1_11"/>
<dbReference type="UniPathway" id="UPA00253">
    <property type="reaction ID" value="UER00332"/>
</dbReference>
<dbReference type="GO" id="GO:0005524">
    <property type="term" value="F:ATP binding"/>
    <property type="evidence" value="ECO:0007669"/>
    <property type="project" value="UniProtKB-KW"/>
</dbReference>
<dbReference type="GO" id="GO:0004515">
    <property type="term" value="F:nicotinate-nucleotide adenylyltransferase activity"/>
    <property type="evidence" value="ECO:0007669"/>
    <property type="project" value="UniProtKB-UniRule"/>
</dbReference>
<dbReference type="GO" id="GO:0009435">
    <property type="term" value="P:NAD biosynthetic process"/>
    <property type="evidence" value="ECO:0007669"/>
    <property type="project" value="UniProtKB-UniRule"/>
</dbReference>
<dbReference type="CDD" id="cd02165">
    <property type="entry name" value="NMNAT"/>
    <property type="match status" value="1"/>
</dbReference>
<dbReference type="FunFam" id="3.40.50.620:FF:000039">
    <property type="entry name" value="Probable nicotinate-nucleotide adenylyltransferase"/>
    <property type="match status" value="1"/>
</dbReference>
<dbReference type="Gene3D" id="3.40.50.620">
    <property type="entry name" value="HUPs"/>
    <property type="match status" value="1"/>
</dbReference>
<dbReference type="HAMAP" id="MF_00244">
    <property type="entry name" value="NaMN_adenylyltr"/>
    <property type="match status" value="1"/>
</dbReference>
<dbReference type="InterPro" id="IPR004821">
    <property type="entry name" value="Cyt_trans-like"/>
</dbReference>
<dbReference type="InterPro" id="IPR005248">
    <property type="entry name" value="NadD/NMNAT"/>
</dbReference>
<dbReference type="InterPro" id="IPR014729">
    <property type="entry name" value="Rossmann-like_a/b/a_fold"/>
</dbReference>
<dbReference type="NCBIfam" id="TIGR00125">
    <property type="entry name" value="cyt_tran_rel"/>
    <property type="match status" value="1"/>
</dbReference>
<dbReference type="NCBIfam" id="TIGR00482">
    <property type="entry name" value="nicotinate (nicotinamide) nucleotide adenylyltransferase"/>
    <property type="match status" value="1"/>
</dbReference>
<dbReference type="NCBIfam" id="NF000840">
    <property type="entry name" value="PRK00071.1-3"/>
    <property type="match status" value="1"/>
</dbReference>
<dbReference type="PANTHER" id="PTHR39321">
    <property type="entry name" value="NICOTINATE-NUCLEOTIDE ADENYLYLTRANSFERASE-RELATED"/>
    <property type="match status" value="1"/>
</dbReference>
<dbReference type="PANTHER" id="PTHR39321:SF3">
    <property type="entry name" value="PHOSPHOPANTETHEINE ADENYLYLTRANSFERASE"/>
    <property type="match status" value="1"/>
</dbReference>
<dbReference type="Pfam" id="PF01467">
    <property type="entry name" value="CTP_transf_like"/>
    <property type="match status" value="1"/>
</dbReference>
<dbReference type="SUPFAM" id="SSF52374">
    <property type="entry name" value="Nucleotidylyl transferase"/>
    <property type="match status" value="1"/>
</dbReference>